<accession>Q5JSZ5</accession>
<accession>O60270</accession>
<accession>Q5JSZ7</accession>
<accession>Q66VZ2</accession>
<accession>Q68CR0</accession>
<accession>Q96EI9</accession>
<accession>Q9H683</accession>
<reference key="1">
    <citation type="journal article" date="2004" name="Nat. Genet.">
        <title>Complete sequencing and characterization of 21,243 full-length human cDNAs.</title>
        <authorList>
            <person name="Ota T."/>
            <person name="Suzuki Y."/>
            <person name="Nishikawa T."/>
            <person name="Otsuki T."/>
            <person name="Sugiyama T."/>
            <person name="Irie R."/>
            <person name="Wakamatsu A."/>
            <person name="Hayashi K."/>
            <person name="Sato H."/>
            <person name="Nagai K."/>
            <person name="Kimura K."/>
            <person name="Makita H."/>
            <person name="Sekine M."/>
            <person name="Obayashi M."/>
            <person name="Nishi T."/>
            <person name="Shibahara T."/>
            <person name="Tanaka T."/>
            <person name="Ishii S."/>
            <person name="Yamamoto J."/>
            <person name="Saito K."/>
            <person name="Kawai Y."/>
            <person name="Isono Y."/>
            <person name="Nakamura Y."/>
            <person name="Nagahari K."/>
            <person name="Murakami K."/>
            <person name="Yasuda T."/>
            <person name="Iwayanagi T."/>
            <person name="Wagatsuma M."/>
            <person name="Shiratori A."/>
            <person name="Sudo H."/>
            <person name="Hosoiri T."/>
            <person name="Kaku Y."/>
            <person name="Kodaira H."/>
            <person name="Kondo H."/>
            <person name="Sugawara M."/>
            <person name="Takahashi M."/>
            <person name="Kanda K."/>
            <person name="Yokoi T."/>
            <person name="Furuya T."/>
            <person name="Kikkawa E."/>
            <person name="Omura Y."/>
            <person name="Abe K."/>
            <person name="Kamihara K."/>
            <person name="Katsuta N."/>
            <person name="Sato K."/>
            <person name="Tanikawa M."/>
            <person name="Yamazaki M."/>
            <person name="Ninomiya K."/>
            <person name="Ishibashi T."/>
            <person name="Yamashita H."/>
            <person name="Murakawa K."/>
            <person name="Fujimori K."/>
            <person name="Tanai H."/>
            <person name="Kimata M."/>
            <person name="Watanabe M."/>
            <person name="Hiraoka S."/>
            <person name="Chiba Y."/>
            <person name="Ishida S."/>
            <person name="Ono Y."/>
            <person name="Takiguchi S."/>
            <person name="Watanabe S."/>
            <person name="Yosida M."/>
            <person name="Hotuta T."/>
            <person name="Kusano J."/>
            <person name="Kanehori K."/>
            <person name="Takahashi-Fujii A."/>
            <person name="Hara H."/>
            <person name="Tanase T.-O."/>
            <person name="Nomura Y."/>
            <person name="Togiya S."/>
            <person name="Komai F."/>
            <person name="Hara R."/>
            <person name="Takeuchi K."/>
            <person name="Arita M."/>
            <person name="Imose N."/>
            <person name="Musashino K."/>
            <person name="Yuuki H."/>
            <person name="Oshima A."/>
            <person name="Sasaki N."/>
            <person name="Aotsuka S."/>
            <person name="Yoshikawa Y."/>
            <person name="Matsunawa H."/>
            <person name="Ichihara T."/>
            <person name="Shiohata N."/>
            <person name="Sano S."/>
            <person name="Moriya S."/>
            <person name="Momiyama H."/>
            <person name="Satoh N."/>
            <person name="Takami S."/>
            <person name="Terashima Y."/>
            <person name="Suzuki O."/>
            <person name="Nakagawa S."/>
            <person name="Senoh A."/>
            <person name="Mizoguchi H."/>
            <person name="Goto Y."/>
            <person name="Shimizu F."/>
            <person name="Wakebe H."/>
            <person name="Hishigaki H."/>
            <person name="Watanabe T."/>
            <person name="Sugiyama A."/>
            <person name="Takemoto M."/>
            <person name="Kawakami B."/>
            <person name="Yamazaki M."/>
            <person name="Watanabe K."/>
            <person name="Kumagai A."/>
            <person name="Itakura S."/>
            <person name="Fukuzumi Y."/>
            <person name="Fujimori Y."/>
            <person name="Komiyama M."/>
            <person name="Tashiro H."/>
            <person name="Tanigami A."/>
            <person name="Fujiwara T."/>
            <person name="Ono T."/>
            <person name="Yamada K."/>
            <person name="Fujii Y."/>
            <person name="Ozaki K."/>
            <person name="Hirao M."/>
            <person name="Ohmori Y."/>
            <person name="Kawabata A."/>
            <person name="Hikiji T."/>
            <person name="Kobatake N."/>
            <person name="Inagaki H."/>
            <person name="Ikema Y."/>
            <person name="Okamoto S."/>
            <person name="Okitani R."/>
            <person name="Kawakami T."/>
            <person name="Noguchi S."/>
            <person name="Itoh T."/>
            <person name="Shigeta K."/>
            <person name="Senba T."/>
            <person name="Matsumura K."/>
            <person name="Nakajima Y."/>
            <person name="Mizuno T."/>
            <person name="Morinaga M."/>
            <person name="Sasaki M."/>
            <person name="Togashi T."/>
            <person name="Oyama M."/>
            <person name="Hata H."/>
            <person name="Watanabe M."/>
            <person name="Komatsu T."/>
            <person name="Mizushima-Sugano J."/>
            <person name="Satoh T."/>
            <person name="Shirai Y."/>
            <person name="Takahashi Y."/>
            <person name="Nakagawa K."/>
            <person name="Okumura K."/>
            <person name="Nagase T."/>
            <person name="Nomura N."/>
            <person name="Kikuchi H."/>
            <person name="Masuho Y."/>
            <person name="Yamashita R."/>
            <person name="Nakai K."/>
            <person name="Yada T."/>
            <person name="Nakamura Y."/>
            <person name="Ohara O."/>
            <person name="Isogai T."/>
            <person name="Sugano S."/>
        </authorList>
    </citation>
    <scope>NUCLEOTIDE SEQUENCE [LARGE SCALE MRNA] (ISOFORM 3)</scope>
</reference>
<reference key="2">
    <citation type="submission" date="2004-07" db="EMBL/GenBank/DDBJ databases">
        <authorList>
            <person name="Zhou G."/>
            <person name="Shen C."/>
            <person name="Li H."/>
            <person name="Ke R."/>
            <person name="Zhong G."/>
            <person name="Lin L."/>
            <person name="Yang S."/>
        </authorList>
    </citation>
    <scope>NUCLEOTIDE SEQUENCE [LARGE SCALE MRNA] (ISOFORM 4)</scope>
</reference>
<reference key="3">
    <citation type="journal article" date="2004" name="Nature">
        <title>DNA sequence and analysis of human chromosome 9.</title>
        <authorList>
            <person name="Humphray S.J."/>
            <person name="Oliver K."/>
            <person name="Hunt A.R."/>
            <person name="Plumb R.W."/>
            <person name="Loveland J.E."/>
            <person name="Howe K.L."/>
            <person name="Andrews T.D."/>
            <person name="Searle S."/>
            <person name="Hunt S.E."/>
            <person name="Scott C.E."/>
            <person name="Jones M.C."/>
            <person name="Ainscough R."/>
            <person name="Almeida J.P."/>
            <person name="Ambrose K.D."/>
            <person name="Ashwell R.I.S."/>
            <person name="Babbage A.K."/>
            <person name="Babbage S."/>
            <person name="Bagguley C.L."/>
            <person name="Bailey J."/>
            <person name="Banerjee R."/>
            <person name="Barker D.J."/>
            <person name="Barlow K.F."/>
            <person name="Bates K."/>
            <person name="Beasley H."/>
            <person name="Beasley O."/>
            <person name="Bird C.P."/>
            <person name="Bray-Allen S."/>
            <person name="Brown A.J."/>
            <person name="Brown J.Y."/>
            <person name="Burford D."/>
            <person name="Burrill W."/>
            <person name="Burton J."/>
            <person name="Carder C."/>
            <person name="Carter N.P."/>
            <person name="Chapman J.C."/>
            <person name="Chen Y."/>
            <person name="Clarke G."/>
            <person name="Clark S.Y."/>
            <person name="Clee C.M."/>
            <person name="Clegg S."/>
            <person name="Collier R.E."/>
            <person name="Corby N."/>
            <person name="Crosier M."/>
            <person name="Cummings A.T."/>
            <person name="Davies J."/>
            <person name="Dhami P."/>
            <person name="Dunn M."/>
            <person name="Dutta I."/>
            <person name="Dyer L.W."/>
            <person name="Earthrowl M.E."/>
            <person name="Faulkner L."/>
            <person name="Fleming C.J."/>
            <person name="Frankish A."/>
            <person name="Frankland J.A."/>
            <person name="French L."/>
            <person name="Fricker D.G."/>
            <person name="Garner P."/>
            <person name="Garnett J."/>
            <person name="Ghori J."/>
            <person name="Gilbert J.G.R."/>
            <person name="Glison C."/>
            <person name="Grafham D.V."/>
            <person name="Gribble S."/>
            <person name="Griffiths C."/>
            <person name="Griffiths-Jones S."/>
            <person name="Grocock R."/>
            <person name="Guy J."/>
            <person name="Hall R.E."/>
            <person name="Hammond S."/>
            <person name="Harley J.L."/>
            <person name="Harrison E.S.I."/>
            <person name="Hart E.A."/>
            <person name="Heath P.D."/>
            <person name="Henderson C.D."/>
            <person name="Hopkins B.L."/>
            <person name="Howard P.J."/>
            <person name="Howden P.J."/>
            <person name="Huckle E."/>
            <person name="Johnson C."/>
            <person name="Johnson D."/>
            <person name="Joy A.A."/>
            <person name="Kay M."/>
            <person name="Keenan S."/>
            <person name="Kershaw J.K."/>
            <person name="Kimberley A.M."/>
            <person name="King A."/>
            <person name="Knights A."/>
            <person name="Laird G.K."/>
            <person name="Langford C."/>
            <person name="Lawlor S."/>
            <person name="Leongamornlert D.A."/>
            <person name="Leversha M."/>
            <person name="Lloyd C."/>
            <person name="Lloyd D.M."/>
            <person name="Lovell J."/>
            <person name="Martin S."/>
            <person name="Mashreghi-Mohammadi M."/>
            <person name="Matthews L."/>
            <person name="McLaren S."/>
            <person name="McLay K.E."/>
            <person name="McMurray A."/>
            <person name="Milne S."/>
            <person name="Nickerson T."/>
            <person name="Nisbett J."/>
            <person name="Nordsiek G."/>
            <person name="Pearce A.V."/>
            <person name="Peck A.I."/>
            <person name="Porter K.M."/>
            <person name="Pandian R."/>
            <person name="Pelan S."/>
            <person name="Phillimore B."/>
            <person name="Povey S."/>
            <person name="Ramsey Y."/>
            <person name="Rand V."/>
            <person name="Scharfe M."/>
            <person name="Sehra H.K."/>
            <person name="Shownkeen R."/>
            <person name="Sims S.K."/>
            <person name="Skuce C.D."/>
            <person name="Smith M."/>
            <person name="Steward C.A."/>
            <person name="Swarbreck D."/>
            <person name="Sycamore N."/>
            <person name="Tester J."/>
            <person name="Thorpe A."/>
            <person name="Tracey A."/>
            <person name="Tromans A."/>
            <person name="Thomas D.W."/>
            <person name="Wall M."/>
            <person name="Wallis J.M."/>
            <person name="West A.P."/>
            <person name="Whitehead S.L."/>
            <person name="Willey D.L."/>
            <person name="Williams S.A."/>
            <person name="Wilming L."/>
            <person name="Wray P.W."/>
            <person name="Young L."/>
            <person name="Ashurst J.L."/>
            <person name="Coulson A."/>
            <person name="Blocker H."/>
            <person name="Durbin R.M."/>
            <person name="Sulston J.E."/>
            <person name="Hubbard T."/>
            <person name="Jackson M.J."/>
            <person name="Bentley D.R."/>
            <person name="Beck S."/>
            <person name="Rogers J."/>
            <person name="Dunham I."/>
        </authorList>
    </citation>
    <scope>NUCLEOTIDE SEQUENCE [LARGE SCALE GENOMIC DNA]</scope>
</reference>
<reference key="4">
    <citation type="journal article" date="2004" name="Genome Res.">
        <title>The status, quality, and expansion of the NIH full-length cDNA project: the Mammalian Gene Collection (MGC).</title>
        <authorList>
            <consortium name="The MGC Project Team"/>
        </authorList>
    </citation>
    <scope>NUCLEOTIDE SEQUENCE [LARGE SCALE MRNA] (ISOFORM 2)</scope>
    <source>
        <tissue>Eye</tissue>
    </source>
</reference>
<reference key="5">
    <citation type="journal article" date="2007" name="BMC Genomics">
        <title>The full-ORF clone resource of the German cDNA consortium.</title>
        <authorList>
            <person name="Bechtel S."/>
            <person name="Rosenfelder H."/>
            <person name="Duda A."/>
            <person name="Schmidt C.P."/>
            <person name="Ernst U."/>
            <person name="Wellenreuther R."/>
            <person name="Mehrle A."/>
            <person name="Schuster C."/>
            <person name="Bahr A."/>
            <person name="Bloecker H."/>
            <person name="Heubner D."/>
            <person name="Hoerlein A."/>
            <person name="Michel G."/>
            <person name="Wedler H."/>
            <person name="Koehrer K."/>
            <person name="Ottenwaelder B."/>
            <person name="Poustka A."/>
            <person name="Wiemann S."/>
            <person name="Schupp I."/>
        </authorList>
    </citation>
    <scope>NUCLEOTIDE SEQUENCE [LARGE SCALE MRNA] OF 291-2229 (ISOFORM 5)</scope>
    <source>
        <tissue>Colon carcinoma</tissue>
    </source>
</reference>
<reference key="6">
    <citation type="journal article" date="1998" name="DNA Res.">
        <title>Prediction of the coding sequences of unidentified human genes. IX. The complete sequences of 100 new cDNA clones from brain which can code for large proteins in vitro.</title>
        <authorList>
            <person name="Nagase T."/>
            <person name="Ishikawa K."/>
            <person name="Miyajima N."/>
            <person name="Tanaka A."/>
            <person name="Kotani H."/>
            <person name="Nomura N."/>
            <person name="Ohara O."/>
        </authorList>
    </citation>
    <scope>NUCLEOTIDE SEQUENCE [LARGE SCALE MRNA] OF 1560-2229</scope>
    <source>
        <tissue>Brain</tissue>
    </source>
</reference>
<reference key="7">
    <citation type="journal article" date="2006" name="Cell">
        <title>Global, in vivo, and site-specific phosphorylation dynamics in signaling networks.</title>
        <authorList>
            <person name="Olsen J.V."/>
            <person name="Blagoev B."/>
            <person name="Gnad F."/>
            <person name="Macek B."/>
            <person name="Kumar C."/>
            <person name="Mortensen P."/>
            <person name="Mann M."/>
        </authorList>
    </citation>
    <scope>PHOSPHORYLATION [LARGE SCALE ANALYSIS] AT SER-388 AND SER-1754</scope>
    <scope>IDENTIFICATION BY MASS SPECTROMETRY [LARGE SCALE ANALYSIS]</scope>
    <source>
        <tissue>Cervix carcinoma</tissue>
    </source>
</reference>
<reference key="8">
    <citation type="journal article" date="2006" name="Nat. Biotechnol.">
        <title>A probability-based approach for high-throughput protein phosphorylation analysis and site localization.</title>
        <authorList>
            <person name="Beausoleil S.A."/>
            <person name="Villen J."/>
            <person name="Gerber S.A."/>
            <person name="Rush J."/>
            <person name="Gygi S.P."/>
        </authorList>
    </citation>
    <scope>PHOSPHORYLATION [LARGE SCALE ANALYSIS] AT SER-166 AND SER-168</scope>
    <scope>IDENTIFICATION BY MASS SPECTROMETRY [LARGE SCALE ANALYSIS]</scope>
    <source>
        <tissue>Cervix carcinoma</tissue>
    </source>
</reference>
<reference key="9">
    <citation type="journal article" date="2008" name="J. Proteome Res.">
        <title>Combining protein-based IMAC, peptide-based IMAC, and MudPIT for efficient phosphoproteomic analysis.</title>
        <authorList>
            <person name="Cantin G.T."/>
            <person name="Yi W."/>
            <person name="Lu B."/>
            <person name="Park S.K."/>
            <person name="Xu T."/>
            <person name="Lee J.-D."/>
            <person name="Yates J.R. III"/>
        </authorList>
    </citation>
    <scope>PHOSPHORYLATION [LARGE SCALE ANALYSIS] AT SER-776 (ISOFORM 1)</scope>
    <scope>IDENTIFICATION BY MASS SPECTROMETRY [LARGE SCALE ANALYSIS]</scope>
    <source>
        <tissue>Cervix carcinoma</tissue>
    </source>
</reference>
<reference key="10">
    <citation type="journal article" date="2008" name="Mol. Cell">
        <title>Kinase-selective enrichment enables quantitative phosphoproteomics of the kinome across the cell cycle.</title>
        <authorList>
            <person name="Daub H."/>
            <person name="Olsen J.V."/>
            <person name="Bairlein M."/>
            <person name="Gnad F."/>
            <person name="Oppermann F.S."/>
            <person name="Korner R."/>
            <person name="Greff Z."/>
            <person name="Keri G."/>
            <person name="Stemmann O."/>
            <person name="Mann M."/>
        </authorList>
    </citation>
    <scope>IDENTIFICATION BY MASS SPECTROMETRY [LARGE SCALE ANALYSIS]</scope>
    <source>
        <tissue>Cervix carcinoma</tissue>
    </source>
</reference>
<reference key="11">
    <citation type="journal article" date="2008" name="Proc. Natl. Acad. Sci. U.S.A.">
        <title>A quantitative atlas of mitotic phosphorylation.</title>
        <authorList>
            <person name="Dephoure N."/>
            <person name="Zhou C."/>
            <person name="Villen J."/>
            <person name="Beausoleil S.A."/>
            <person name="Bakalarski C.E."/>
            <person name="Elledge S.J."/>
            <person name="Gygi S.P."/>
        </authorList>
    </citation>
    <scope>PHOSPHORYLATION [LARGE SCALE ANALYSIS] AT SER-166; SER-168; SER-226; SER-416; THR-736; SER-740; SER-745; SER-1132; SER-1231; SER-1470 AND SER-1843</scope>
    <scope>PHOSPHORYLATION [LARGE SCALE ANALYSIS] AT SER-776 (ISOFORM 1)</scope>
    <scope>IDENTIFICATION BY MASS SPECTROMETRY [LARGE SCALE ANALYSIS]</scope>
    <source>
        <tissue>Cervix carcinoma</tissue>
    </source>
</reference>
<reference key="12">
    <citation type="journal article" date="2008" name="Proteomics">
        <title>Large-scale phosphoproteome analysis of human liver tissue by enrichment and fractionation of phosphopeptides with strong anion exchange chromatography.</title>
        <authorList>
            <person name="Han G."/>
            <person name="Ye M."/>
            <person name="Zhou H."/>
            <person name="Jiang X."/>
            <person name="Feng S."/>
            <person name="Jiang X."/>
            <person name="Tian R."/>
            <person name="Wan D."/>
            <person name="Zou H."/>
            <person name="Gu J."/>
        </authorList>
    </citation>
    <scope>PHOSPHORYLATION [LARGE SCALE ANALYSIS] AT SER-388</scope>
    <scope>IDENTIFICATION BY MASS SPECTROMETRY [LARGE SCALE ANALYSIS]</scope>
    <source>
        <tissue>Liver</tissue>
    </source>
</reference>
<reference key="13">
    <citation type="journal article" date="2009" name="Anal. Chem.">
        <title>Lys-N and trypsin cover complementary parts of the phosphoproteome in a refined SCX-based approach.</title>
        <authorList>
            <person name="Gauci S."/>
            <person name="Helbig A.O."/>
            <person name="Slijper M."/>
            <person name="Krijgsveld J."/>
            <person name="Heck A.J."/>
            <person name="Mohammed S."/>
        </authorList>
    </citation>
    <scope>IDENTIFICATION BY MASS SPECTROMETRY [LARGE SCALE ANALYSIS]</scope>
</reference>
<reference key="14">
    <citation type="journal article" date="2009" name="Sci. Signal.">
        <title>Quantitative phosphoproteomic analysis of T cell receptor signaling reveals system-wide modulation of protein-protein interactions.</title>
        <authorList>
            <person name="Mayya V."/>
            <person name="Lundgren D.H."/>
            <person name="Hwang S.-I."/>
            <person name="Rezaul K."/>
            <person name="Wu L."/>
            <person name="Eng J.K."/>
            <person name="Rodionov V."/>
            <person name="Han D.K."/>
        </authorList>
    </citation>
    <scope>PHOSPHORYLATION [LARGE SCALE ANALYSIS] AT SER-166 AND SER-388</scope>
    <scope>IDENTIFICATION BY MASS SPECTROMETRY [LARGE SCALE ANALYSIS]</scope>
    <source>
        <tissue>Leukemic T-cell</tissue>
    </source>
</reference>
<reference key="15">
    <citation type="journal article" date="2010" name="Sci. Signal.">
        <title>Quantitative phosphoproteomics reveals widespread full phosphorylation site occupancy during mitosis.</title>
        <authorList>
            <person name="Olsen J.V."/>
            <person name="Vermeulen M."/>
            <person name="Santamaria A."/>
            <person name="Kumar C."/>
            <person name="Miller M.L."/>
            <person name="Jensen L.J."/>
            <person name="Gnad F."/>
            <person name="Cox J."/>
            <person name="Jensen T.S."/>
            <person name="Nigg E.A."/>
            <person name="Brunak S."/>
            <person name="Mann M."/>
        </authorList>
    </citation>
    <scope>PHOSPHORYLATION [LARGE SCALE ANALYSIS] AT SER-166; SER-168; SER-388; SER-740; SER-745 AND SER-1507</scope>
    <scope>IDENTIFICATION BY MASS SPECTROMETRY [LARGE SCALE ANALYSIS]</scope>
    <source>
        <tissue>Cervix carcinoma</tissue>
    </source>
</reference>
<reference key="16">
    <citation type="journal article" date="2011" name="BMC Syst. Biol.">
        <title>Initial characterization of the human central proteome.</title>
        <authorList>
            <person name="Burkard T.R."/>
            <person name="Planyavsky M."/>
            <person name="Kaupe I."/>
            <person name="Breitwieser F.P."/>
            <person name="Buerckstuemmer T."/>
            <person name="Bennett K.L."/>
            <person name="Superti-Furga G."/>
            <person name="Colinge J."/>
        </authorList>
    </citation>
    <scope>IDENTIFICATION BY MASS SPECTROMETRY [LARGE SCALE ANALYSIS]</scope>
</reference>
<reference key="17">
    <citation type="journal article" date="2011" name="Sci. Signal.">
        <title>System-wide temporal characterization of the proteome and phosphoproteome of human embryonic stem cell differentiation.</title>
        <authorList>
            <person name="Rigbolt K.T."/>
            <person name="Prokhorova T.A."/>
            <person name="Akimov V."/>
            <person name="Henningsen J."/>
            <person name="Johansen P.T."/>
            <person name="Kratchmarova I."/>
            <person name="Kassem M."/>
            <person name="Mann M."/>
            <person name="Olsen J.V."/>
            <person name="Blagoev B."/>
        </authorList>
    </citation>
    <scope>PHOSPHORYLATION [LARGE SCALE ANALYSIS] AT SER-416</scope>
    <scope>IDENTIFICATION BY MASS SPECTROMETRY [LARGE SCALE ANALYSIS]</scope>
</reference>
<reference key="18">
    <citation type="journal article" date="2013" name="J. Proteome Res.">
        <title>Toward a comprehensive characterization of a human cancer cell phosphoproteome.</title>
        <authorList>
            <person name="Zhou H."/>
            <person name="Di Palma S."/>
            <person name="Preisinger C."/>
            <person name="Peng M."/>
            <person name="Polat A.N."/>
            <person name="Heck A.J."/>
            <person name="Mohammed S."/>
        </authorList>
    </citation>
    <scope>PHOSPHORYLATION [LARGE SCALE ANALYSIS] AT SER-168; THR-228; SER-388; SER-416; SER-480; SER-556; SER-613; SER-740; SER-745 AND SER-765</scope>
    <scope>IDENTIFICATION BY MASS SPECTROMETRY [LARGE SCALE ANALYSIS]</scope>
    <source>
        <tissue>Cervix carcinoma</tissue>
        <tissue>Erythroleukemia</tissue>
    </source>
</reference>
<reference key="19">
    <citation type="journal article" date="2014" name="J. Proteomics">
        <title>An enzyme assisted RP-RPLC approach for in-depth analysis of human liver phosphoproteome.</title>
        <authorList>
            <person name="Bian Y."/>
            <person name="Song C."/>
            <person name="Cheng K."/>
            <person name="Dong M."/>
            <person name="Wang F."/>
            <person name="Huang J."/>
            <person name="Sun D."/>
            <person name="Wang L."/>
            <person name="Ye M."/>
            <person name="Zou H."/>
        </authorList>
    </citation>
    <scope>IDENTIFICATION BY MASS SPECTROMETRY [LARGE SCALE ANALYSIS]</scope>
    <source>
        <tissue>Liver</tissue>
    </source>
</reference>
<reference key="20">
    <citation type="journal article" date="2015" name="Cell Rep.">
        <title>SUMO-2 orchestrates chromatin modifiers in response to DNA damage.</title>
        <authorList>
            <person name="Hendriks I.A."/>
            <person name="Treffers L.W."/>
            <person name="Verlaan-de Vries M."/>
            <person name="Olsen J.V."/>
            <person name="Vertegaal A.C."/>
        </authorList>
    </citation>
    <scope>SUMOYLATION [LARGE SCALE ANALYSIS] AT LYS-963</scope>
    <scope>IDENTIFICATION BY MASS SPECTROMETRY [LARGE SCALE ANALYSIS]</scope>
</reference>
<reference key="21">
    <citation type="journal article" date="2017" name="Nat. Struct. Mol. Biol.">
        <title>Site-specific mapping of the human SUMO proteome reveals co-modification with phosphorylation.</title>
        <authorList>
            <person name="Hendriks I.A."/>
            <person name="Lyon D."/>
            <person name="Young C."/>
            <person name="Jensen L.J."/>
            <person name="Vertegaal A.C."/>
            <person name="Nielsen M.L."/>
        </authorList>
    </citation>
    <scope>SUMOYLATION [LARGE SCALE ANALYSIS] AT LYS-251; LYS-734 AND LYS-963</scope>
    <scope>IDENTIFICATION BY MASS SPECTROMETRY [LARGE SCALE ANALYSIS]</scope>
</reference>
<sequence length="2229" mass="242967">MSDRLGQITKGKDGKSKYSTLSLFDKYKGKSVDAIRSSVIPRHGLQSLGKVAAARRMPPPANLPSLKSENKGNDPNIVIVPKDGTGWANKQDQQDPKSSSATASQPPESLPQPGLQKSVSNLQKPTQSISQENTNSVPGGPKSWAQLNGKPVGHEGGLRGSSRLLSFSPEEFPTLKAAGGQDKAGKEKGVLDLSYGPGPSLRPQNVTSWREGGGRHIISATSLSTSPTELGSRNSSTGDGAPSSACTSDSKDPSLRPAQPVRKGASQFMGNVYHPPTYHDMLPAFMCSPKSSENQGTVERGSFPLPQLRLEPRVPFRQFQMNDQDGKENRLGLSRPLRPLRQLVERAPRPTIINAENLKGLDDLDADADDGWAGLHEEVDYSEKLKFSDDEEEEEVVKDGRPKWNSWDPRRQRQLSMSSADSADAKRTREEGKDWAEAVGASRVVRKAPDPQPPPRKLHGWAPGPDYQKSSMGSMFRQQSIEDKEDKPPPRQKFIQSEMSEAVERARKRREEEERRAREERLAACAAKLKQLDQKCKQARKAGEARKQAEKEVPWSPSAEKASPQENGPAVHKGSPEFPAQETPTTFPEEAPTVSPAVAQSNSSEEEAREAGSPAQEFKYQKSLPPRFQRQQQQQQQEQLYKMQHWQPVYPPPSHPQRTFYPHHPQMLGFDPRWMMMPSYMDPRITPTRTPVDFYPSALHPSGLMKPMMPQESLNGTGCRSEDQNCVPPLQERKVTPIDSPPVWSPEGYMALQSKGYPLPHPKSSDTLAMDMRVRNESSFSASLGRAGGVSAQRDLFEERGEEYLSAFDKKAQADFDSCISSQRIGQELLFPPQENVQDAGAPGGHTQNLRCSPLEPDFVPDEKKPECGSWDVSHQPETADTAHGVERETPREGTAFNISSWDKNGSPNKQPSSEPEWTPEPRSSSSQHPEQTGRTRRSGPIKKPVLKALKVEDKEKELEKIKQELGEESTRLAKEKEQSPTAEKDEDEENDASLANSSTTTLEDKGPGHATFGREATKFEEEEKPDKAWEARPPRESSDVPPMKRNNWIFIDEEQAFGVRGQARGRGRGFREFTFRGRPAGGNGSGLCGGGVLGARSIYCSSQRSGRGRGLREFARPEDCPRAKPRRRVASETHSEGSEYEELPKRRRQRGSENGNEGSLLEREESTLKKGDCRDSWRSNKGCSEDHSGLDAKSRGPRAFGRALPPRLSNCGYGRRTFVSKESPHWQSKSPGSSWQEYGPSDTCGSRRPTDRDYVPDSYRHPDAFGGRGFEDSRAEDKRSFFQDEHVADSENAENRPFRRRRPPRQDKPPRFRRLRQERESLGLWGPEEEPHLLAGQWPGRPKLCSGDKSGTVGRRSPELSYQNSSDHANEEWETASESSDFSERRERREGPGSEPDSQVDGGLSGASLGEKKELAKRSFSSQRPVVDRQSRKLEPGGFGEKPVRPGGGDTSPRYESQQNGTPLKVKRSPDEALPGGLSGCSSGSGHSPYALERAAHASADLPEASSKKAEKEAKLAAPRAGEQGEAMKQFDLNYGSAIIENCGSSPGEESEVGSMVGEGFIEVLTKKQRRLLEEERRKKEQAVQVPVKGRGLSSRIPPRFAKKQNNLCLEQGDVTVPGSSLGTEIWESSSQALPVQAPANDSWRKAVTAFSSTETGSAEQGFKSSQGDSGVDLSAESRESSATSSQRSSPYGTLKPEEMSGPGLAEPKADSHKEQAPKPSEQKDSEQGSGQSKEHRPGPIGNERSLKNRKGSEGAERLQGAVVPPVNGVEIHVDSVLPVPPIEFGVSPKDSDFSLPPGSASGPTGSPVVKLQDALASNAGLTQSIPILRRDHHIQRAIGLSPMSFPTADLTLKMESARKAWENSPSLPEQSSPGGAGSGIQPPSSVGASSGVNYSSFGGVSMPPMPVASVAPSASMPGSHLPPLYLDGHVFASQPRLVPQTIPQQQSYQQAAAAQQIPISLHTSLQAQAQLGLRGGLPVSQSQEIFSSLQPFRSQVYMHPSLSPPSTMILSGGTALKPPYSAFPGMQPLEMVKPQSGSPYQPMSGNQALVYEGQLSQAAGLGASQMLDSQLPQLTMPLPRYGSGQQPLILPQSIQLPPGQSLSVGAPRRIPPPGSQPPVLNTSREPSQMEMKGFHFADSKQNVPSGGPVPSPQTYRPSSASPSGKPSGSAVNMGSVQGHYVQQAKQRVDEKPSLGAVKLQEAPSAASQMKRTGAIKPRAVKVEESKA</sequence>
<name>PRC2B_HUMAN</name>
<organism>
    <name type="scientific">Homo sapiens</name>
    <name type="common">Human</name>
    <dbReference type="NCBI Taxonomy" id="9606"/>
    <lineage>
        <taxon>Eukaryota</taxon>
        <taxon>Metazoa</taxon>
        <taxon>Chordata</taxon>
        <taxon>Craniata</taxon>
        <taxon>Vertebrata</taxon>
        <taxon>Euteleostomi</taxon>
        <taxon>Mammalia</taxon>
        <taxon>Eutheria</taxon>
        <taxon>Euarchontoglires</taxon>
        <taxon>Primates</taxon>
        <taxon>Haplorrhini</taxon>
        <taxon>Catarrhini</taxon>
        <taxon>Hominidae</taxon>
        <taxon>Homo</taxon>
    </lineage>
</organism>
<proteinExistence type="evidence at protein level"/>
<feature type="chain" id="PRO_0000274481" description="Protein PRRC2B">
    <location>
        <begin position="1"/>
        <end position="2229"/>
    </location>
</feature>
<feature type="region of interest" description="Disordered" evidence="3">
    <location>
        <begin position="49"/>
        <end position="269"/>
    </location>
</feature>
<feature type="region of interest" description="Disordered" evidence="3">
    <location>
        <begin position="385"/>
        <end position="640"/>
    </location>
</feature>
<feature type="region of interest" description="Disordered" evidence="3">
    <location>
        <begin position="830"/>
        <end position="1045"/>
    </location>
</feature>
<feature type="region of interest" description="Disordered" evidence="3">
    <location>
        <begin position="1107"/>
        <end position="1528"/>
    </location>
</feature>
<feature type="region of interest" description="Disordered" evidence="3">
    <location>
        <begin position="1576"/>
        <end position="1599"/>
    </location>
</feature>
<feature type="region of interest" description="Disordered" evidence="3">
    <location>
        <begin position="1650"/>
        <end position="1763"/>
    </location>
</feature>
<feature type="region of interest" description="Disordered" evidence="3">
    <location>
        <begin position="1790"/>
        <end position="1809"/>
    </location>
</feature>
<feature type="region of interest" description="Disordered" evidence="3">
    <location>
        <begin position="1861"/>
        <end position="1890"/>
    </location>
</feature>
<feature type="region of interest" description="Disordered" evidence="3">
    <location>
        <begin position="2086"/>
        <end position="2126"/>
    </location>
</feature>
<feature type="region of interest" description="Disordered" evidence="3">
    <location>
        <begin position="2138"/>
        <end position="2229"/>
    </location>
</feature>
<feature type="coiled-coil region" evidence="2">
    <location>
        <begin position="495"/>
        <end position="553"/>
    </location>
</feature>
<feature type="coiled-coil region" evidence="2">
    <location>
        <begin position="1563"/>
        <end position="1587"/>
    </location>
</feature>
<feature type="compositionally biased region" description="Polar residues" evidence="3">
    <location>
        <begin position="88"/>
        <end position="107"/>
    </location>
</feature>
<feature type="compositionally biased region" description="Polar residues" evidence="3">
    <location>
        <begin position="115"/>
        <end position="137"/>
    </location>
</feature>
<feature type="compositionally biased region" description="Polar residues" evidence="3">
    <location>
        <begin position="219"/>
        <end position="248"/>
    </location>
</feature>
<feature type="compositionally biased region" description="Basic and acidic residues" evidence="3">
    <location>
        <begin position="423"/>
        <end position="436"/>
    </location>
</feature>
<feature type="compositionally biased region" description="Polar residues" evidence="3">
    <location>
        <begin position="468"/>
        <end position="479"/>
    </location>
</feature>
<feature type="compositionally biased region" description="Basic and acidic residues" evidence="3">
    <location>
        <begin position="480"/>
        <end position="489"/>
    </location>
</feature>
<feature type="compositionally biased region" description="Basic and acidic residues" evidence="3">
    <location>
        <begin position="502"/>
        <end position="522"/>
    </location>
</feature>
<feature type="compositionally biased region" description="Basic and acidic residues" evidence="3">
    <location>
        <begin position="530"/>
        <end position="553"/>
    </location>
</feature>
<feature type="compositionally biased region" description="Low complexity" evidence="3">
    <location>
        <begin position="576"/>
        <end position="593"/>
    </location>
</feature>
<feature type="compositionally biased region" description="Low complexity" evidence="3">
    <location>
        <begin position="629"/>
        <end position="639"/>
    </location>
</feature>
<feature type="compositionally biased region" description="Polar residues" evidence="3">
    <location>
        <begin position="897"/>
        <end position="933"/>
    </location>
</feature>
<feature type="compositionally biased region" description="Basic and acidic residues" evidence="3">
    <location>
        <begin position="950"/>
        <end position="979"/>
    </location>
</feature>
<feature type="compositionally biased region" description="Basic and acidic residues" evidence="3">
    <location>
        <begin position="1016"/>
        <end position="1039"/>
    </location>
</feature>
<feature type="compositionally biased region" description="Basic and acidic residues" evidence="3">
    <location>
        <begin position="1111"/>
        <end position="1123"/>
    </location>
</feature>
<feature type="compositionally biased region" description="Basic and acidic residues" evidence="3">
    <location>
        <begin position="1161"/>
        <end position="1195"/>
    </location>
</feature>
<feature type="compositionally biased region" description="Polar residues" evidence="3">
    <location>
        <begin position="1226"/>
        <end position="1237"/>
    </location>
</feature>
<feature type="compositionally biased region" description="Basic and acidic residues" evidence="3">
    <location>
        <begin position="1249"/>
        <end position="1298"/>
    </location>
</feature>
<feature type="compositionally biased region" description="Basic and acidic residues" evidence="3">
    <location>
        <begin position="1305"/>
        <end position="1322"/>
    </location>
</feature>
<feature type="compositionally biased region" description="Basic and acidic residues" evidence="3">
    <location>
        <begin position="1383"/>
        <end position="1393"/>
    </location>
</feature>
<feature type="compositionally biased region" description="Basic and acidic residues" evidence="3">
    <location>
        <begin position="1427"/>
        <end position="1436"/>
    </location>
</feature>
<feature type="compositionally biased region" description="Basic and acidic residues" evidence="3">
    <location>
        <begin position="1507"/>
        <end position="1516"/>
    </location>
</feature>
<feature type="compositionally biased region" description="Polar residues" evidence="3">
    <location>
        <begin position="1651"/>
        <end position="1670"/>
    </location>
</feature>
<feature type="compositionally biased region" description="Low complexity" evidence="3">
    <location>
        <begin position="1682"/>
        <end position="1691"/>
    </location>
</feature>
<feature type="compositionally biased region" description="Basic and acidic residues" evidence="3">
    <location>
        <begin position="1709"/>
        <end position="1739"/>
    </location>
</feature>
<feature type="compositionally biased region" description="Basic and acidic residues" evidence="3">
    <location>
        <begin position="1746"/>
        <end position="1758"/>
    </location>
</feature>
<feature type="compositionally biased region" description="Low complexity" evidence="3">
    <location>
        <begin position="1796"/>
        <end position="1809"/>
    </location>
</feature>
<feature type="compositionally biased region" description="Polar residues" evidence="3">
    <location>
        <begin position="1865"/>
        <end position="1875"/>
    </location>
</feature>
<feature type="compositionally biased region" description="Low complexity" evidence="3">
    <location>
        <begin position="2086"/>
        <end position="2105"/>
    </location>
</feature>
<feature type="compositionally biased region" description="Low complexity" evidence="3">
    <location>
        <begin position="2159"/>
        <end position="2172"/>
    </location>
</feature>
<feature type="modified residue" description="Phosphoserine" evidence="8 12 13 14">
    <location>
        <position position="166"/>
    </location>
</feature>
<feature type="modified residue" description="Phosphoserine" evidence="8 12 14 16">
    <location>
        <position position="168"/>
    </location>
</feature>
<feature type="modified residue" description="Phosphoserine" evidence="1">
    <location>
        <position position="222"/>
    </location>
</feature>
<feature type="modified residue" description="Phosphoserine" evidence="12">
    <location>
        <position position="226"/>
    </location>
</feature>
<feature type="modified residue" description="Phosphothreonine" evidence="16">
    <location>
        <position position="228"/>
    </location>
</feature>
<feature type="modified residue" description="Phosphoserine" evidence="9 11 13 14 16">
    <location>
        <position position="388"/>
    </location>
</feature>
<feature type="modified residue" description="Phosphoserine" evidence="12 15 16">
    <location>
        <position position="416"/>
    </location>
</feature>
<feature type="modified residue" description="Phosphoserine" evidence="16">
    <location>
        <position position="480"/>
    </location>
</feature>
<feature type="modified residue" description="Phosphoserine" evidence="16">
    <location>
        <position position="556"/>
    </location>
</feature>
<feature type="modified residue" description="Phosphoserine" evidence="16">
    <location>
        <position position="613"/>
    </location>
</feature>
<feature type="modified residue" description="Phosphothreonine" evidence="12">
    <location>
        <position position="736"/>
    </location>
</feature>
<feature type="modified residue" description="Phosphoserine" evidence="12 14 16">
    <location>
        <position position="740"/>
    </location>
</feature>
<feature type="modified residue" description="Phosphoserine" evidence="12 14 16">
    <location>
        <position position="745"/>
    </location>
</feature>
<feature type="modified residue" description="Phosphoserine" evidence="16">
    <location>
        <position position="765"/>
    </location>
</feature>
<feature type="modified residue" description="Phosphoserine" evidence="12">
    <location>
        <position position="1132"/>
    </location>
</feature>
<feature type="modified residue" description="Phosphoserine" evidence="12">
    <location>
        <position position="1231"/>
    </location>
</feature>
<feature type="modified residue" description="Phosphoserine" evidence="12">
    <location>
        <position position="1470"/>
    </location>
</feature>
<feature type="modified residue" description="Phosphoserine" evidence="14">
    <location>
        <position position="1507"/>
    </location>
</feature>
<feature type="modified residue" description="Phosphoserine" evidence="9">
    <location>
        <position position="1754"/>
    </location>
</feature>
<feature type="modified residue" description="Phosphoserine" evidence="12">
    <location>
        <position position="1843"/>
    </location>
</feature>
<feature type="cross-link" description="Glycyl lysine isopeptide (Lys-Gly) (interchain with G-Cter in SUMO2)" evidence="18">
    <location>
        <position position="251"/>
    </location>
</feature>
<feature type="cross-link" description="Glycyl lysine isopeptide (Lys-Gly) (interchain with G-Cter in SUMO2)" evidence="18">
    <location>
        <position position="734"/>
    </location>
</feature>
<feature type="cross-link" description="Glycyl lysine isopeptide (Lys-Gly) (interchain with G-Cter in SUMO2)" evidence="17 18">
    <location>
        <position position="963"/>
    </location>
</feature>
<feature type="splice variant" id="VSP_022760" description="In isoform 2, isoform 3 and isoform 4." evidence="4 5 6">
    <location>
        <begin position="1"/>
        <end position="1903"/>
    </location>
</feature>
<feature type="splice variant" id="VSP_039905" description="In isoform 1." evidence="7">
    <location>
        <begin position="775"/>
        <end position="1468"/>
    </location>
</feature>
<feature type="splice variant" id="VSP_022761" description="In isoform 3." evidence="4">
    <original>Q</original>
    <variation>QQ</variation>
    <location>
        <position position="2075"/>
    </location>
</feature>
<feature type="splice variant" id="VSP_022762" description="In isoform 4." evidence="6">
    <original>PSSASPSGKPSGSAVNMGSVQGHYVQQAKQRVDEKPSLGAVKLQEAPSAASQMKRTGAIKPRAVKVEESKA</original>
    <variation>QNNEWMRNPAWEP</variation>
    <location>
        <begin position="2159"/>
        <end position="2229"/>
    </location>
</feature>
<feature type="sequence variant" id="VAR_057735" description="In dbSNP:rs34553878.">
    <original>M</original>
    <variation>V</variation>
    <location>
        <position position="417"/>
    </location>
</feature>
<feature type="sequence variant" id="VAR_030289" description="In dbSNP:rs10736851.">
    <original>S</original>
    <variation>T</variation>
    <location>
        <position position="1630"/>
    </location>
</feature>
<feature type="sequence variant" id="VAR_030290" description="In dbSNP:rs10751478.">
    <original>L</original>
    <variation>P</variation>
    <location>
        <position position="1675"/>
    </location>
</feature>
<feature type="sequence conflict" description="In Ref. 5; CAH18678." evidence="7" ref="5">
    <original>T</original>
    <variation>S</variation>
    <location>
        <position position="936"/>
    </location>
</feature>
<feature type="sequence conflict" description="In Ref. 5; CAH18678." evidence="7" ref="5">
    <original>P</original>
    <variation>L</variation>
    <location>
        <position position="981"/>
    </location>
</feature>
<feature type="sequence conflict" description="In Ref. 5; CAH18678." evidence="7" ref="5">
    <original>M</original>
    <variation>T</variation>
    <location>
        <position position="1044"/>
    </location>
</feature>
<feature type="sequence conflict" description="In Ref. 5; CAH18678." evidence="7" ref="5">
    <original>A</original>
    <variation>V</variation>
    <location>
        <position position="1276"/>
    </location>
</feature>
<feature type="sequence conflict" description="In Ref. 2; AAU10087." evidence="7" ref="2">
    <original>F</original>
    <variation>L</variation>
    <location>
        <position position="1933"/>
    </location>
</feature>
<feature type="sequence conflict" description="In Ref. 2; AAU10087." evidence="7" ref="2">
    <original>Q</original>
    <variation>R</variation>
    <location>
        <position position="1985"/>
    </location>
</feature>
<feature type="sequence conflict" description="In Ref. 2; AAU10087." evidence="7" ref="2">
    <original>L</original>
    <variation>S</variation>
    <location>
        <position position="2069"/>
    </location>
</feature>
<feature type="sequence conflict" description="In Ref. 2; AAU10087." evidence="7" ref="2">
    <original>G</original>
    <variation>S</variation>
    <location>
        <position position="2135"/>
    </location>
</feature>
<feature type="modified residue" description="Phosphoserine" evidence="10 12">
    <location sequence="Q5JSZ5-5">
        <position position="776"/>
    </location>
</feature>
<keyword id="KW-0025">Alternative splicing</keyword>
<keyword id="KW-0175">Coiled coil</keyword>
<keyword id="KW-1017">Isopeptide bond</keyword>
<keyword id="KW-0597">Phosphoprotein</keyword>
<keyword id="KW-1267">Proteomics identification</keyword>
<keyword id="KW-1185">Reference proteome</keyword>
<keyword id="KW-0832">Ubl conjugation</keyword>
<gene>
    <name type="primary">PRRC2B</name>
    <name type="synonym">BAT2L</name>
    <name type="synonym">BAT2L1</name>
    <name type="synonym">KIAA0515</name>
</gene>
<comment type="interaction">
    <interactant intactId="EBI-744891">
        <id>Q5JSZ5</id>
    </interactant>
    <interactant intactId="EBI-930964">
        <id>P54253</id>
        <label>ATXN1</label>
    </interactant>
    <organismsDiffer>false</organismsDiffer>
    <experiments>5</experiments>
</comment>
<comment type="interaction">
    <interactant intactId="EBI-744891">
        <id>Q5JSZ5</id>
    </interactant>
    <interactant intactId="EBI-744366">
        <id>Q96KQ7</id>
        <label>EHMT2</label>
    </interactant>
    <organismsDiffer>false</organismsDiffer>
    <experiments>2</experiments>
</comment>
<comment type="interaction">
    <interactant intactId="EBI-744891">
        <id>Q5JSZ5</id>
    </interactant>
    <interactant intactId="EBI-1811449">
        <id>Q7Z7L7</id>
        <label>ZER1</label>
    </interactant>
    <organismsDiffer>false</organismsDiffer>
    <experiments>2</experiments>
</comment>
<comment type="interaction">
    <interactant intactId="EBI-744891">
        <id>Q5JSZ5</id>
    </interactant>
    <interactant intactId="EBI-3957603">
        <id>P09022</id>
        <label>Hoxa1</label>
    </interactant>
    <organismsDiffer>true</organismsDiffer>
    <experiments>3</experiments>
</comment>
<comment type="interaction">
    <interactant intactId="EBI-21531669">
        <id>Q5JSZ5-5</id>
    </interactant>
    <interactant intactId="EBI-930964">
        <id>P54253</id>
        <label>ATXN1</label>
    </interactant>
    <organismsDiffer>false</organismsDiffer>
    <experiments>6</experiments>
</comment>
<comment type="alternative products">
    <event type="alternative splicing"/>
    <isoform>
        <id>Q5JSZ5-1</id>
        <name>5</name>
        <sequence type="displayed"/>
    </isoform>
    <isoform>
        <id>Q5JSZ5-2</id>
        <name>2</name>
        <sequence type="described" ref="VSP_022760"/>
    </isoform>
    <isoform>
        <id>Q5JSZ5-3</id>
        <name>3</name>
        <sequence type="described" ref="VSP_022760 VSP_022761"/>
    </isoform>
    <isoform>
        <id>Q5JSZ5-4</id>
        <name>4</name>
        <sequence type="described" ref="VSP_022760 VSP_022762"/>
    </isoform>
    <isoform>
        <id>Q5JSZ5-5</id>
        <name>1</name>
        <sequence type="described" ref="VSP_039905"/>
    </isoform>
</comment>
<comment type="sequence caution" evidence="7">
    <conflict type="erroneous termination">
        <sequence resource="EMBL-CDS" id="CAH18678"/>
    </conflict>
    <text>Truncated C-terminus.</text>
</comment>
<protein>
    <recommendedName>
        <fullName>Protein PRRC2B</fullName>
    </recommendedName>
    <alternativeName>
        <fullName>HLA-B-associated transcript 2-like 1</fullName>
    </alternativeName>
    <alternativeName>
        <fullName>Proline-rich coiled-coil protein 2B</fullName>
    </alternativeName>
</protein>
<dbReference type="EMBL" id="AK026162">
    <property type="protein sequence ID" value="BAB15380.1"/>
    <property type="molecule type" value="mRNA"/>
</dbReference>
<dbReference type="EMBL" id="AY700780">
    <property type="protein sequence ID" value="AAU10087.1"/>
    <property type="molecule type" value="mRNA"/>
</dbReference>
<dbReference type="EMBL" id="AL358781">
    <property type="status" value="NOT_ANNOTATED_CDS"/>
    <property type="molecule type" value="Genomic_DNA"/>
</dbReference>
<dbReference type="EMBL" id="BC012289">
    <property type="protein sequence ID" value="AAH12289.1"/>
    <property type="molecule type" value="mRNA"/>
</dbReference>
<dbReference type="EMBL" id="CR749818">
    <property type="protein sequence ID" value="CAH18678.1"/>
    <property type="status" value="ALT_SEQ"/>
    <property type="molecule type" value="mRNA"/>
</dbReference>
<dbReference type="EMBL" id="AB011087">
    <property type="protein sequence ID" value="BAA25441.1"/>
    <property type="molecule type" value="mRNA"/>
</dbReference>
<dbReference type="CCDS" id="CCDS48044.1">
    <molecule id="Q5JSZ5-1"/>
</dbReference>
<dbReference type="PIR" id="T00083">
    <property type="entry name" value="T00083"/>
</dbReference>
<dbReference type="RefSeq" id="NP_001371747.1">
    <molecule id="Q5JSZ5-1"/>
    <property type="nucleotide sequence ID" value="NM_001384818.1"/>
</dbReference>
<dbReference type="RefSeq" id="NP_037450.2">
    <molecule id="Q5JSZ5-1"/>
    <property type="nucleotide sequence ID" value="NM_013318.3"/>
</dbReference>
<dbReference type="SMR" id="Q5JSZ5"/>
<dbReference type="BioGRID" id="124226">
    <property type="interactions" value="297"/>
</dbReference>
<dbReference type="FunCoup" id="Q5JSZ5">
    <property type="interactions" value="957"/>
</dbReference>
<dbReference type="IntAct" id="Q5JSZ5">
    <property type="interactions" value="101"/>
</dbReference>
<dbReference type="MINT" id="Q5JSZ5"/>
<dbReference type="STRING" id="9606.ENSP00000349856"/>
<dbReference type="GlyCosmos" id="Q5JSZ5">
    <property type="glycosylation" value="6 sites, 2 glycans"/>
</dbReference>
<dbReference type="GlyGen" id="Q5JSZ5">
    <property type="glycosylation" value="10 sites, 2 O-linked glycans (9 sites)"/>
</dbReference>
<dbReference type="iPTMnet" id="Q5JSZ5"/>
<dbReference type="MetOSite" id="Q5JSZ5"/>
<dbReference type="PhosphoSitePlus" id="Q5JSZ5"/>
<dbReference type="BioMuta" id="PRRC2B"/>
<dbReference type="DMDM" id="308153415"/>
<dbReference type="jPOST" id="Q5JSZ5"/>
<dbReference type="MassIVE" id="Q5JSZ5"/>
<dbReference type="PaxDb" id="9606-ENSP00000349856"/>
<dbReference type="PeptideAtlas" id="Q5JSZ5"/>
<dbReference type="ProteomicsDB" id="63178">
    <molecule id="Q5JSZ5-1"/>
</dbReference>
<dbReference type="ProteomicsDB" id="63179">
    <molecule id="Q5JSZ5-2"/>
</dbReference>
<dbReference type="ProteomicsDB" id="63180">
    <molecule id="Q5JSZ5-3"/>
</dbReference>
<dbReference type="ProteomicsDB" id="63181">
    <molecule id="Q5JSZ5-4"/>
</dbReference>
<dbReference type="ProteomicsDB" id="63182">
    <molecule id="Q5JSZ5-5"/>
</dbReference>
<dbReference type="Pumba" id="Q5JSZ5"/>
<dbReference type="DNASU" id="84726"/>
<dbReference type="Ensembl" id="ENST00000682501.1">
    <molecule id="Q5JSZ5-5"/>
    <property type="protein sequence ID" value="ENSP00000508073.1"/>
    <property type="gene ID" value="ENSG00000288701.1"/>
</dbReference>
<dbReference type="Ensembl" id="ENST00000683519.1">
    <molecule id="Q5JSZ5-1"/>
    <property type="protein sequence ID" value="ENSP00000508048.1"/>
    <property type="gene ID" value="ENSG00000288701.1"/>
</dbReference>
<dbReference type="Ensembl" id="ENST00000684596.1">
    <molecule id="Q5JSZ5-1"/>
    <property type="protein sequence ID" value="ENSP00000508005.1"/>
    <property type="gene ID" value="ENSG00000288701.1"/>
</dbReference>
<dbReference type="GeneID" id="84726"/>
<dbReference type="KEGG" id="hsa:84726"/>
<dbReference type="MANE-Select" id="ENST00000683519.1">
    <property type="protein sequence ID" value="ENSP00000508048.1"/>
    <property type="RefSeq nucleotide sequence ID" value="NM_013318.4"/>
    <property type="RefSeq protein sequence ID" value="NP_037450.2"/>
</dbReference>
<dbReference type="UCSC" id="uc004cam.2">
    <molecule id="Q5JSZ5-1"/>
    <property type="organism name" value="human"/>
</dbReference>
<dbReference type="AGR" id="HGNC:28121"/>
<dbReference type="CTD" id="84726"/>
<dbReference type="DisGeNET" id="84726"/>
<dbReference type="GeneCards" id="PRRC2B"/>
<dbReference type="HGNC" id="HGNC:28121">
    <property type="gene designation" value="PRRC2B"/>
</dbReference>
<dbReference type="HPA" id="ENSG00000288701">
    <property type="expression patterns" value="Low tissue specificity"/>
</dbReference>
<dbReference type="MIM" id="619544">
    <property type="type" value="gene"/>
</dbReference>
<dbReference type="neXtProt" id="NX_Q5JSZ5"/>
<dbReference type="PharmGKB" id="PA165585468"/>
<dbReference type="VEuPathDB" id="HostDB:ENSG00000130723"/>
<dbReference type="eggNOG" id="KOG4817">
    <property type="taxonomic scope" value="Eukaryota"/>
</dbReference>
<dbReference type="GeneTree" id="ENSGT00950000183161"/>
<dbReference type="HOGENOM" id="CLU_001247_0_0_1"/>
<dbReference type="InParanoid" id="Q5JSZ5"/>
<dbReference type="OMA" id="KPVMQQE"/>
<dbReference type="OrthoDB" id="1939715at2759"/>
<dbReference type="PAN-GO" id="Q5JSZ5">
    <property type="GO annotations" value="1 GO annotation based on evolutionary models"/>
</dbReference>
<dbReference type="PhylomeDB" id="Q5JSZ5"/>
<dbReference type="TreeFam" id="TF328738"/>
<dbReference type="PathwayCommons" id="Q5JSZ5"/>
<dbReference type="SignaLink" id="Q5JSZ5"/>
<dbReference type="BioGRID-ORCS" id="84726">
    <property type="hits" value="19 hits in 1138 CRISPR screens"/>
</dbReference>
<dbReference type="CD-CODE" id="232F8A39">
    <property type="entry name" value="P-body"/>
</dbReference>
<dbReference type="CD-CODE" id="DEE660B4">
    <property type="entry name" value="Stress granule"/>
</dbReference>
<dbReference type="ChiTaRS" id="PRRC2B">
    <property type="organism name" value="human"/>
</dbReference>
<dbReference type="GeneWiki" id="KIAA0515"/>
<dbReference type="GenomeRNAi" id="84726"/>
<dbReference type="Pharos" id="Q5JSZ5">
    <property type="development level" value="Tdark"/>
</dbReference>
<dbReference type="PRO" id="PR:Q5JSZ5"/>
<dbReference type="Proteomes" id="UP000005640">
    <property type="component" value="Chromosome 9"/>
</dbReference>
<dbReference type="RNAct" id="Q5JSZ5">
    <property type="molecule type" value="protein"/>
</dbReference>
<dbReference type="ExpressionAtlas" id="Q5JSZ5">
    <property type="expression patterns" value="baseline and differential"/>
</dbReference>
<dbReference type="GO" id="GO:0003723">
    <property type="term" value="F:RNA binding"/>
    <property type="evidence" value="ECO:0007005"/>
    <property type="project" value="UniProtKB"/>
</dbReference>
<dbReference type="GO" id="GO:0030154">
    <property type="term" value="P:cell differentiation"/>
    <property type="evidence" value="ECO:0000318"/>
    <property type="project" value="GO_Central"/>
</dbReference>
<dbReference type="InterPro" id="IPR009738">
    <property type="entry name" value="BAT2_N"/>
</dbReference>
<dbReference type="InterPro" id="IPR033184">
    <property type="entry name" value="PRRC2"/>
</dbReference>
<dbReference type="PANTHER" id="PTHR14038">
    <property type="entry name" value="BAT2 HLA-B-ASSOCIATED TRANSCRIPT 2"/>
    <property type="match status" value="1"/>
</dbReference>
<dbReference type="PANTHER" id="PTHR14038:SF4">
    <property type="entry name" value="PROTEIN PRRC2B"/>
    <property type="match status" value="1"/>
</dbReference>
<dbReference type="Pfam" id="PF07001">
    <property type="entry name" value="BAT2_N"/>
    <property type="match status" value="1"/>
</dbReference>
<evidence type="ECO:0000250" key="1">
    <source>
        <dbReference type="UniProtKB" id="Q7TPM1"/>
    </source>
</evidence>
<evidence type="ECO:0000255" key="2"/>
<evidence type="ECO:0000256" key="3">
    <source>
        <dbReference type="SAM" id="MobiDB-lite"/>
    </source>
</evidence>
<evidence type="ECO:0000303" key="4">
    <source>
    </source>
</evidence>
<evidence type="ECO:0000303" key="5">
    <source>
    </source>
</evidence>
<evidence type="ECO:0000303" key="6">
    <source ref="2"/>
</evidence>
<evidence type="ECO:0000305" key="7"/>
<evidence type="ECO:0007744" key="8">
    <source>
    </source>
</evidence>
<evidence type="ECO:0007744" key="9">
    <source>
    </source>
</evidence>
<evidence type="ECO:0007744" key="10">
    <source>
    </source>
</evidence>
<evidence type="ECO:0007744" key="11">
    <source>
    </source>
</evidence>
<evidence type="ECO:0007744" key="12">
    <source>
    </source>
</evidence>
<evidence type="ECO:0007744" key="13">
    <source>
    </source>
</evidence>
<evidence type="ECO:0007744" key="14">
    <source>
    </source>
</evidence>
<evidence type="ECO:0007744" key="15">
    <source>
    </source>
</evidence>
<evidence type="ECO:0007744" key="16">
    <source>
    </source>
</evidence>
<evidence type="ECO:0007744" key="17">
    <source>
    </source>
</evidence>
<evidence type="ECO:0007744" key="18">
    <source>
    </source>
</evidence>